<keyword id="KW-0066">ATP synthesis</keyword>
<keyword id="KW-0139">CF(1)</keyword>
<keyword id="KW-0375">Hydrogen ion transport</keyword>
<keyword id="KW-0406">Ion transport</keyword>
<keyword id="KW-0472">Membrane</keyword>
<keyword id="KW-1185">Reference proteome</keyword>
<keyword id="KW-0793">Thylakoid</keyword>
<keyword id="KW-0813">Transport</keyword>
<accession>A5GNC7</accession>
<feature type="chain" id="PRO_1000053364" description="ATP synthase gamma chain">
    <location>
        <begin position="1"/>
        <end position="316"/>
    </location>
</feature>
<proteinExistence type="inferred from homology"/>
<reference key="1">
    <citation type="submission" date="2006-05" db="EMBL/GenBank/DDBJ databases">
        <authorList>
            <consortium name="Genoscope"/>
        </authorList>
    </citation>
    <scope>NUCLEOTIDE SEQUENCE [LARGE SCALE GENOMIC DNA]</scope>
    <source>
        <strain>WH7803</strain>
    </source>
</reference>
<comment type="function">
    <text evidence="1">Produces ATP from ADP in the presence of a proton gradient across the membrane. The gamma chain is believed to be important in regulating ATPase activity and the flow of protons through the CF(0) complex.</text>
</comment>
<comment type="subunit">
    <text evidence="1">F-type ATPases have 2 components, CF(1) - the catalytic core - and CF(0) - the membrane proton channel. CF(1) has five subunits: alpha(3), beta(3), gamma(1), delta(1), epsilon(1). CF(0) has three main subunits: a, b and c.</text>
</comment>
<comment type="subcellular location">
    <subcellularLocation>
        <location evidence="1">Cellular thylakoid membrane</location>
        <topology evidence="1">Peripheral membrane protein</topology>
    </subcellularLocation>
</comment>
<comment type="similarity">
    <text evidence="1">Belongs to the ATPase gamma chain family.</text>
</comment>
<protein>
    <recommendedName>
        <fullName evidence="1">ATP synthase gamma chain</fullName>
    </recommendedName>
    <alternativeName>
        <fullName evidence="1">ATP synthase F1 sector gamma subunit</fullName>
    </alternativeName>
    <alternativeName>
        <fullName evidence="1">F-ATPase gamma subunit</fullName>
    </alternativeName>
</protein>
<sequence>MANLKEIRDRIKSVKNTRKITEAMRLVAAAKVRRAQEQVLRSRPFADRLARLLENLQARMRFEDADAPLLEDRPLETVTLMAVTGDRGLCGGYNANIIKRTEQRFEELQSKGYKVNLVLIGRKAISYFTNRSYPIQATFTGLEQVPTADEAGSVANEVFAEFLSETTDRVEIIFTKFINLVSCKPVVQTLLPLDPQGIADADDEIFRLTTKDGDLRVETGSAPANAQPELSSEIVFEQSPDQLLNALLPLYLQNQVLRSLQEAAASELASRMTAMNNASDNAKALAKTLTLDYNKARQAAITQEILEVAGGAAAVG</sequence>
<evidence type="ECO:0000255" key="1">
    <source>
        <dbReference type="HAMAP-Rule" id="MF_00815"/>
    </source>
</evidence>
<gene>
    <name evidence="1" type="primary">atpG</name>
    <name evidence="1" type="synonym">atpC</name>
    <name type="ordered locus">SynWH7803_2016</name>
</gene>
<name>ATPG_SYNPW</name>
<dbReference type="EMBL" id="CT971583">
    <property type="protein sequence ID" value="CAK24442.1"/>
    <property type="molecule type" value="Genomic_DNA"/>
</dbReference>
<dbReference type="SMR" id="A5GNC7"/>
<dbReference type="STRING" id="32051.SynWH7803_2016"/>
<dbReference type="KEGG" id="syx:SynWH7803_2016"/>
<dbReference type="eggNOG" id="COG0224">
    <property type="taxonomic scope" value="Bacteria"/>
</dbReference>
<dbReference type="HOGENOM" id="CLU_050669_0_0_3"/>
<dbReference type="OrthoDB" id="9812769at2"/>
<dbReference type="Proteomes" id="UP000001566">
    <property type="component" value="Chromosome"/>
</dbReference>
<dbReference type="GO" id="GO:0031676">
    <property type="term" value="C:plasma membrane-derived thylakoid membrane"/>
    <property type="evidence" value="ECO:0007669"/>
    <property type="project" value="UniProtKB-SubCell"/>
</dbReference>
<dbReference type="GO" id="GO:0045259">
    <property type="term" value="C:proton-transporting ATP synthase complex"/>
    <property type="evidence" value="ECO:0007669"/>
    <property type="project" value="UniProtKB-KW"/>
</dbReference>
<dbReference type="GO" id="GO:0005524">
    <property type="term" value="F:ATP binding"/>
    <property type="evidence" value="ECO:0007669"/>
    <property type="project" value="UniProtKB-UniRule"/>
</dbReference>
<dbReference type="GO" id="GO:0046933">
    <property type="term" value="F:proton-transporting ATP synthase activity, rotational mechanism"/>
    <property type="evidence" value="ECO:0007669"/>
    <property type="project" value="UniProtKB-UniRule"/>
</dbReference>
<dbReference type="CDD" id="cd12151">
    <property type="entry name" value="F1-ATPase_gamma"/>
    <property type="match status" value="1"/>
</dbReference>
<dbReference type="FunFam" id="3.40.1380.10:FF:000006">
    <property type="entry name" value="ATP synthase gamma chain"/>
    <property type="match status" value="1"/>
</dbReference>
<dbReference type="FunFam" id="1.10.287.80:FF:000003">
    <property type="entry name" value="ATP synthase gamma chain, chloroplastic"/>
    <property type="match status" value="1"/>
</dbReference>
<dbReference type="Gene3D" id="3.40.1380.10">
    <property type="match status" value="1"/>
</dbReference>
<dbReference type="Gene3D" id="1.10.287.80">
    <property type="entry name" value="ATP synthase, gamma subunit, helix hairpin domain"/>
    <property type="match status" value="2"/>
</dbReference>
<dbReference type="HAMAP" id="MF_00815">
    <property type="entry name" value="ATP_synth_gamma_bact"/>
    <property type="match status" value="1"/>
</dbReference>
<dbReference type="InterPro" id="IPR035968">
    <property type="entry name" value="ATP_synth_F1_ATPase_gsu"/>
</dbReference>
<dbReference type="InterPro" id="IPR000131">
    <property type="entry name" value="ATP_synth_F1_gsu"/>
</dbReference>
<dbReference type="InterPro" id="IPR023632">
    <property type="entry name" value="ATP_synth_F1_gsu_CS"/>
</dbReference>
<dbReference type="NCBIfam" id="TIGR01146">
    <property type="entry name" value="ATPsyn_F1gamma"/>
    <property type="match status" value="1"/>
</dbReference>
<dbReference type="NCBIfam" id="NF004145">
    <property type="entry name" value="PRK05621.1-2"/>
    <property type="match status" value="1"/>
</dbReference>
<dbReference type="PANTHER" id="PTHR11693">
    <property type="entry name" value="ATP SYNTHASE GAMMA CHAIN"/>
    <property type="match status" value="1"/>
</dbReference>
<dbReference type="PANTHER" id="PTHR11693:SF41">
    <property type="entry name" value="ATP SYNTHASE GAMMA CHAIN, CHLOROPLASTIC"/>
    <property type="match status" value="1"/>
</dbReference>
<dbReference type="Pfam" id="PF00231">
    <property type="entry name" value="ATP-synt"/>
    <property type="match status" value="1"/>
</dbReference>
<dbReference type="PRINTS" id="PR00126">
    <property type="entry name" value="ATPASEGAMMA"/>
</dbReference>
<dbReference type="SUPFAM" id="SSF52943">
    <property type="entry name" value="ATP synthase (F1-ATPase), gamma subunit"/>
    <property type="match status" value="1"/>
</dbReference>
<dbReference type="PROSITE" id="PS00153">
    <property type="entry name" value="ATPASE_GAMMA"/>
    <property type="match status" value="1"/>
</dbReference>
<organism>
    <name type="scientific">Synechococcus sp. (strain WH7803)</name>
    <dbReference type="NCBI Taxonomy" id="32051"/>
    <lineage>
        <taxon>Bacteria</taxon>
        <taxon>Bacillati</taxon>
        <taxon>Cyanobacteriota</taxon>
        <taxon>Cyanophyceae</taxon>
        <taxon>Synechococcales</taxon>
        <taxon>Synechococcaceae</taxon>
        <taxon>Synechococcus</taxon>
    </lineage>
</organism>